<protein>
    <recommendedName>
        <fullName>Serine/threonine-protein kinase</fullName>
        <ecNumber>2.7.11.1</ecNumber>
    </recommendedName>
</protein>
<name>KR1_EHV1K</name>
<gene>
    <name type="primary">US2</name>
</gene>
<dbReference type="EC" id="2.7.11.1"/>
<dbReference type="EMBL" id="M87497">
    <property type="protein sequence ID" value="AAA46070.1"/>
    <property type="molecule type" value="Genomic_DNA"/>
</dbReference>
<dbReference type="PIR" id="A42538">
    <property type="entry name" value="TVBEKA"/>
</dbReference>
<dbReference type="SMR" id="P32516"/>
<dbReference type="GO" id="GO:0005524">
    <property type="term" value="F:ATP binding"/>
    <property type="evidence" value="ECO:0007669"/>
    <property type="project" value="UniProtKB-KW"/>
</dbReference>
<dbReference type="GO" id="GO:0106310">
    <property type="term" value="F:protein serine kinase activity"/>
    <property type="evidence" value="ECO:0007669"/>
    <property type="project" value="RHEA"/>
</dbReference>
<dbReference type="GO" id="GO:0004674">
    <property type="term" value="F:protein serine/threonine kinase activity"/>
    <property type="evidence" value="ECO:0007669"/>
    <property type="project" value="UniProtKB-KW"/>
</dbReference>
<dbReference type="CDD" id="cd00180">
    <property type="entry name" value="PKc"/>
    <property type="match status" value="1"/>
</dbReference>
<dbReference type="Gene3D" id="3.30.200.20">
    <property type="entry name" value="Phosphorylase Kinase, domain 1"/>
    <property type="match status" value="1"/>
</dbReference>
<dbReference type="Gene3D" id="1.10.510.10">
    <property type="entry name" value="Transferase(Phosphotransferase) domain 1"/>
    <property type="match status" value="1"/>
</dbReference>
<dbReference type="InterPro" id="IPR011009">
    <property type="entry name" value="Kinase-like_dom_sf"/>
</dbReference>
<dbReference type="InterPro" id="IPR050660">
    <property type="entry name" value="NEK_Ser/Thr_kinase"/>
</dbReference>
<dbReference type="InterPro" id="IPR000719">
    <property type="entry name" value="Prot_kinase_dom"/>
</dbReference>
<dbReference type="InterPro" id="IPR008271">
    <property type="entry name" value="Ser/Thr_kinase_AS"/>
</dbReference>
<dbReference type="PANTHER" id="PTHR43671">
    <property type="entry name" value="SERINE/THREONINE-PROTEIN KINASE NEK"/>
    <property type="match status" value="1"/>
</dbReference>
<dbReference type="PANTHER" id="PTHR43671:SF98">
    <property type="entry name" value="SERINE_THREONINE-PROTEIN KINASE NEK11"/>
    <property type="match status" value="1"/>
</dbReference>
<dbReference type="Pfam" id="PF00069">
    <property type="entry name" value="Pkinase"/>
    <property type="match status" value="1"/>
</dbReference>
<dbReference type="SMART" id="SM00220">
    <property type="entry name" value="S_TKc"/>
    <property type="match status" value="1"/>
</dbReference>
<dbReference type="SUPFAM" id="SSF56112">
    <property type="entry name" value="Protein kinase-like (PK-like)"/>
    <property type="match status" value="1"/>
</dbReference>
<dbReference type="PROSITE" id="PS50011">
    <property type="entry name" value="PROTEIN_KINASE_DOM"/>
    <property type="match status" value="1"/>
</dbReference>
<dbReference type="PROSITE" id="PS00108">
    <property type="entry name" value="PROTEIN_KINASE_ST"/>
    <property type="match status" value="1"/>
</dbReference>
<organismHost>
    <name type="scientific">Equus caballus</name>
    <name type="common">Horse</name>
    <dbReference type="NCBI Taxonomy" id="9796"/>
</organismHost>
<evidence type="ECO:0000255" key="1">
    <source>
        <dbReference type="PROSITE-ProRule" id="PRU00159"/>
    </source>
</evidence>
<evidence type="ECO:0000255" key="2">
    <source>
        <dbReference type="PROSITE-ProRule" id="PRU10027"/>
    </source>
</evidence>
<evidence type="ECO:0000256" key="3">
    <source>
        <dbReference type="SAM" id="MobiDB-lite"/>
    </source>
</evidence>
<keyword id="KW-0067">ATP-binding</keyword>
<keyword id="KW-0418">Kinase</keyword>
<keyword id="KW-0547">Nucleotide-binding</keyword>
<keyword id="KW-0723">Serine/threonine-protein kinase</keyword>
<keyword id="KW-0808">Transferase</keyword>
<accession>P32516</accession>
<feature type="chain" id="PRO_0000086178" description="Serine/threonine-protein kinase">
    <location>
        <begin position="1"/>
        <end position="382"/>
    </location>
</feature>
<feature type="domain" description="Protein kinase" evidence="1">
    <location>
        <begin position="93"/>
        <end position="379"/>
    </location>
</feature>
<feature type="region of interest" description="Disordered" evidence="3">
    <location>
        <begin position="1"/>
        <end position="75"/>
    </location>
</feature>
<feature type="compositionally biased region" description="Basic and acidic residues" evidence="3">
    <location>
        <begin position="1"/>
        <end position="10"/>
    </location>
</feature>
<feature type="compositionally biased region" description="Polar residues" evidence="3">
    <location>
        <begin position="12"/>
        <end position="24"/>
    </location>
</feature>
<feature type="compositionally biased region" description="Acidic residues" evidence="3">
    <location>
        <begin position="45"/>
        <end position="75"/>
    </location>
</feature>
<feature type="active site" description="Proton acceptor" evidence="1 2">
    <location>
        <position position="207"/>
    </location>
</feature>
<feature type="binding site" evidence="1">
    <location>
        <begin position="99"/>
        <end position="107"/>
    </location>
    <ligand>
        <name>ATP</name>
        <dbReference type="ChEBI" id="CHEBI:30616"/>
    </ligand>
</feature>
<feature type="binding site" evidence="1">
    <location>
        <position position="122"/>
    </location>
    <ligand>
        <name>ATP</name>
        <dbReference type="ChEBI" id="CHEBI:30616"/>
    </ligand>
</feature>
<organism>
    <name type="scientific">Equine herpesvirus 1 (strain Kentucky A)</name>
    <name type="common">EHV-1</name>
    <name type="synonym">Equine abortion virus</name>
    <dbReference type="NCBI Taxonomy" id="10329"/>
    <lineage>
        <taxon>Viruses</taxon>
        <taxon>Duplodnaviria</taxon>
        <taxon>Heunggongvirae</taxon>
        <taxon>Peploviricota</taxon>
        <taxon>Herviviricetes</taxon>
        <taxon>Herpesvirales</taxon>
        <taxon>Orthoherpesviridae</taxon>
        <taxon>Alphaherpesvirinae</taxon>
        <taxon>Varicellovirus</taxon>
        <taxon>Varicellovirus equidalpha1</taxon>
        <taxon>Equid alphaherpesvirus 1</taxon>
    </lineage>
</organism>
<reference key="1">
    <citation type="journal article" date="1992" name="Virology">
        <title>Open reading frames encoding a protein kinase, homolog of glycoprotein gX of pseudorabies virus, and a novel glycoprotein map within the unique short segment of equine herpesvirus type 1.</title>
        <authorList>
            <person name="Colle C.F. III"/>
            <person name="Flowers C.C."/>
            <person name="O'Callaghan D.J."/>
        </authorList>
    </citation>
    <scope>NUCLEOTIDE SEQUENCE [GENOMIC DNA]</scope>
</reference>
<sequence>MENKQCDHLTDWFSTTSDASESMDTTPPLPPPTPSVDPSYSGAAADEDLYSDISEGDLEYSDCDSASESDEDDDDCLIPSKEKAREVAASFGYTVIKTLTPGSEGRVMVATKDGQPEPVVLKIGQKGTTLIEAMMLRNVNHPSVIQMKDTLVSGAITCMVLPHYSSDLYTFLTKESRRIPIDQALIIEKQILEGLRYLHAQRIIHRDVKTENIFINSVDQVCIADFGAAQFPVVEPADLGLAGTVETNAPEVLARAKYNSKADIWSAGIVLFEMLAYPSTLFEDPPSTPEEYVKSCHSQLLKIISTLKINPEEFPRDPGSRLVRGYIEYSRLERNAYTRYPCFQRVNLHIDGEFLVHKMLAFNAAMRPSAEELLSYPMFAQL</sequence>
<proteinExistence type="inferred from homology"/>
<comment type="catalytic activity">
    <reaction>
        <text>L-seryl-[protein] + ATP = O-phospho-L-seryl-[protein] + ADP + H(+)</text>
        <dbReference type="Rhea" id="RHEA:17989"/>
        <dbReference type="Rhea" id="RHEA-COMP:9863"/>
        <dbReference type="Rhea" id="RHEA-COMP:11604"/>
        <dbReference type="ChEBI" id="CHEBI:15378"/>
        <dbReference type="ChEBI" id="CHEBI:29999"/>
        <dbReference type="ChEBI" id="CHEBI:30616"/>
        <dbReference type="ChEBI" id="CHEBI:83421"/>
        <dbReference type="ChEBI" id="CHEBI:456216"/>
        <dbReference type="EC" id="2.7.11.1"/>
    </reaction>
</comment>
<comment type="catalytic activity">
    <reaction>
        <text>L-threonyl-[protein] + ATP = O-phospho-L-threonyl-[protein] + ADP + H(+)</text>
        <dbReference type="Rhea" id="RHEA:46608"/>
        <dbReference type="Rhea" id="RHEA-COMP:11060"/>
        <dbReference type="Rhea" id="RHEA-COMP:11605"/>
        <dbReference type="ChEBI" id="CHEBI:15378"/>
        <dbReference type="ChEBI" id="CHEBI:30013"/>
        <dbReference type="ChEBI" id="CHEBI:30616"/>
        <dbReference type="ChEBI" id="CHEBI:61977"/>
        <dbReference type="ChEBI" id="CHEBI:456216"/>
        <dbReference type="EC" id="2.7.11.1"/>
    </reaction>
</comment>
<comment type="similarity">
    <text evidence="1">Belongs to the protein kinase superfamily. Ser/Thr protein kinase family.</text>
</comment>